<keyword id="KW-0067">ATP-binding</keyword>
<keyword id="KW-0436">Ligase</keyword>
<keyword id="KW-0460">Magnesium</keyword>
<keyword id="KW-0479">Metal-binding</keyword>
<keyword id="KW-0547">Nucleotide-binding</keyword>
<keyword id="KW-1185">Reference proteome</keyword>
<keyword id="KW-0816">Tricarboxylic acid cycle</keyword>
<evidence type="ECO:0000255" key="1">
    <source>
        <dbReference type="HAMAP-Rule" id="MF_00558"/>
    </source>
</evidence>
<evidence type="ECO:0000269" key="2">
    <source>
    </source>
</evidence>
<evidence type="ECO:0000305" key="3"/>
<organism>
    <name type="scientific">Pseudomonas aeruginosa (strain ATCC 15692 / DSM 22644 / CIP 104116 / JCM 14847 / LMG 12228 / 1C / PRS 101 / PAO1)</name>
    <dbReference type="NCBI Taxonomy" id="208964"/>
    <lineage>
        <taxon>Bacteria</taxon>
        <taxon>Pseudomonadati</taxon>
        <taxon>Pseudomonadota</taxon>
        <taxon>Gammaproteobacteria</taxon>
        <taxon>Pseudomonadales</taxon>
        <taxon>Pseudomonadaceae</taxon>
        <taxon>Pseudomonas</taxon>
    </lineage>
</organism>
<dbReference type="EC" id="6.2.1.5" evidence="1 2"/>
<dbReference type="EMBL" id="AF128399">
    <property type="protein sequence ID" value="AAD21622.1"/>
    <property type="molecule type" value="Genomic_DNA"/>
</dbReference>
<dbReference type="EMBL" id="AE004091">
    <property type="protein sequence ID" value="AAG04977.1"/>
    <property type="molecule type" value="Genomic_DNA"/>
</dbReference>
<dbReference type="EMBL" id="X84052">
    <property type="protein sequence ID" value="CAA58870.1"/>
    <property type="molecule type" value="Genomic_DNA"/>
</dbReference>
<dbReference type="PIR" id="A83446">
    <property type="entry name" value="A83446"/>
</dbReference>
<dbReference type="PIR" id="S54847">
    <property type="entry name" value="S54847"/>
</dbReference>
<dbReference type="RefSeq" id="NP_250279.1">
    <property type="nucleotide sequence ID" value="NC_002516.2"/>
</dbReference>
<dbReference type="RefSeq" id="WP_003087425.1">
    <property type="nucleotide sequence ID" value="NZ_QZGE01000003.1"/>
</dbReference>
<dbReference type="SMR" id="P53593"/>
<dbReference type="FunCoup" id="P53593">
    <property type="interactions" value="716"/>
</dbReference>
<dbReference type="STRING" id="208964.PA1588"/>
<dbReference type="PaxDb" id="208964-PA1588"/>
<dbReference type="DNASU" id="882016"/>
<dbReference type="GeneID" id="882016"/>
<dbReference type="KEGG" id="pae:PA1588"/>
<dbReference type="PATRIC" id="fig|208964.12.peg.1647"/>
<dbReference type="PseudoCAP" id="PA1588"/>
<dbReference type="HOGENOM" id="CLU_037430_0_2_6"/>
<dbReference type="InParanoid" id="P53593"/>
<dbReference type="OrthoDB" id="9802602at2"/>
<dbReference type="PhylomeDB" id="P53593"/>
<dbReference type="BioCyc" id="PAER208964:G1FZ6-1618-MONOMER"/>
<dbReference type="UniPathway" id="UPA00223">
    <property type="reaction ID" value="UER00999"/>
</dbReference>
<dbReference type="Proteomes" id="UP000002438">
    <property type="component" value="Chromosome"/>
</dbReference>
<dbReference type="GO" id="GO:0005829">
    <property type="term" value="C:cytosol"/>
    <property type="evidence" value="ECO:0000318"/>
    <property type="project" value="GO_Central"/>
</dbReference>
<dbReference type="GO" id="GO:0042709">
    <property type="term" value="C:succinate-CoA ligase complex"/>
    <property type="evidence" value="ECO:0000314"/>
    <property type="project" value="PseudoCAP"/>
</dbReference>
<dbReference type="GO" id="GO:0005524">
    <property type="term" value="F:ATP binding"/>
    <property type="evidence" value="ECO:0007669"/>
    <property type="project" value="UniProtKB-UniRule"/>
</dbReference>
<dbReference type="GO" id="GO:0000287">
    <property type="term" value="F:magnesium ion binding"/>
    <property type="evidence" value="ECO:0007669"/>
    <property type="project" value="UniProtKB-UniRule"/>
</dbReference>
<dbReference type="GO" id="GO:0004550">
    <property type="term" value="F:nucleoside diphosphate kinase activity"/>
    <property type="evidence" value="ECO:0000314"/>
    <property type="project" value="PseudoCAP"/>
</dbReference>
<dbReference type="GO" id="GO:0004775">
    <property type="term" value="F:succinate-CoA ligase (ADP-forming) activity"/>
    <property type="evidence" value="ECO:0000314"/>
    <property type="project" value="PseudoCAP"/>
</dbReference>
<dbReference type="GO" id="GO:0004776">
    <property type="term" value="F:succinate-CoA ligase (GDP-forming) activity"/>
    <property type="evidence" value="ECO:0007669"/>
    <property type="project" value="RHEA"/>
</dbReference>
<dbReference type="GO" id="GO:0009142">
    <property type="term" value="P:nucleoside triphosphate biosynthetic process"/>
    <property type="evidence" value="ECO:0000314"/>
    <property type="project" value="PseudoCAP"/>
</dbReference>
<dbReference type="GO" id="GO:0006104">
    <property type="term" value="P:succinyl-CoA metabolic process"/>
    <property type="evidence" value="ECO:0000318"/>
    <property type="project" value="GO_Central"/>
</dbReference>
<dbReference type="GO" id="GO:0006099">
    <property type="term" value="P:tricarboxylic acid cycle"/>
    <property type="evidence" value="ECO:0000318"/>
    <property type="project" value="GO_Central"/>
</dbReference>
<dbReference type="FunFam" id="3.30.1490.20:FF:000002">
    <property type="entry name" value="Succinate--CoA ligase [ADP-forming] subunit beta"/>
    <property type="match status" value="1"/>
</dbReference>
<dbReference type="FunFam" id="3.30.470.20:FF:000002">
    <property type="entry name" value="Succinate--CoA ligase [ADP-forming] subunit beta"/>
    <property type="match status" value="1"/>
</dbReference>
<dbReference type="FunFam" id="3.40.50.261:FF:000001">
    <property type="entry name" value="Succinate--CoA ligase [ADP-forming] subunit beta"/>
    <property type="match status" value="1"/>
</dbReference>
<dbReference type="Gene3D" id="3.30.1490.20">
    <property type="entry name" value="ATP-grasp fold, A domain"/>
    <property type="match status" value="1"/>
</dbReference>
<dbReference type="Gene3D" id="3.30.470.20">
    <property type="entry name" value="ATP-grasp fold, B domain"/>
    <property type="match status" value="1"/>
</dbReference>
<dbReference type="Gene3D" id="3.40.50.261">
    <property type="entry name" value="Succinyl-CoA synthetase domains"/>
    <property type="match status" value="1"/>
</dbReference>
<dbReference type="HAMAP" id="MF_00558">
    <property type="entry name" value="Succ_CoA_beta"/>
    <property type="match status" value="1"/>
</dbReference>
<dbReference type="InterPro" id="IPR011761">
    <property type="entry name" value="ATP-grasp"/>
</dbReference>
<dbReference type="InterPro" id="IPR013650">
    <property type="entry name" value="ATP-grasp_succ-CoA_synth-type"/>
</dbReference>
<dbReference type="InterPro" id="IPR013815">
    <property type="entry name" value="ATP_grasp_subdomain_1"/>
</dbReference>
<dbReference type="InterPro" id="IPR017866">
    <property type="entry name" value="Succ-CoA_synthase_bsu_CS"/>
</dbReference>
<dbReference type="InterPro" id="IPR005811">
    <property type="entry name" value="SUCC_ACL_C"/>
</dbReference>
<dbReference type="InterPro" id="IPR005809">
    <property type="entry name" value="Succ_CoA_ligase-like_bsu"/>
</dbReference>
<dbReference type="InterPro" id="IPR016102">
    <property type="entry name" value="Succinyl-CoA_synth-like"/>
</dbReference>
<dbReference type="NCBIfam" id="NF001913">
    <property type="entry name" value="PRK00696.1"/>
    <property type="match status" value="1"/>
</dbReference>
<dbReference type="NCBIfam" id="TIGR01016">
    <property type="entry name" value="sucCoAbeta"/>
    <property type="match status" value="1"/>
</dbReference>
<dbReference type="PANTHER" id="PTHR11815:SF10">
    <property type="entry name" value="SUCCINATE--COA LIGASE [GDP-FORMING] SUBUNIT BETA, MITOCHONDRIAL"/>
    <property type="match status" value="1"/>
</dbReference>
<dbReference type="PANTHER" id="PTHR11815">
    <property type="entry name" value="SUCCINYL-COA SYNTHETASE BETA CHAIN"/>
    <property type="match status" value="1"/>
</dbReference>
<dbReference type="Pfam" id="PF08442">
    <property type="entry name" value="ATP-grasp_2"/>
    <property type="match status" value="1"/>
</dbReference>
<dbReference type="Pfam" id="PF00549">
    <property type="entry name" value="Ligase_CoA"/>
    <property type="match status" value="1"/>
</dbReference>
<dbReference type="PIRSF" id="PIRSF001554">
    <property type="entry name" value="SucCS_beta"/>
    <property type="match status" value="1"/>
</dbReference>
<dbReference type="SUPFAM" id="SSF56059">
    <property type="entry name" value="Glutathione synthetase ATP-binding domain-like"/>
    <property type="match status" value="1"/>
</dbReference>
<dbReference type="SUPFAM" id="SSF52210">
    <property type="entry name" value="Succinyl-CoA synthetase domains"/>
    <property type="match status" value="1"/>
</dbReference>
<dbReference type="PROSITE" id="PS50975">
    <property type="entry name" value="ATP_GRASP"/>
    <property type="match status" value="1"/>
</dbReference>
<dbReference type="PROSITE" id="PS01217">
    <property type="entry name" value="SUCCINYL_COA_LIG_3"/>
    <property type="match status" value="1"/>
</dbReference>
<proteinExistence type="evidence at protein level"/>
<feature type="chain" id="PRO_0000102844" description="Succinate--CoA ligase [ADP-forming] subunit beta">
    <location>
        <begin position="1"/>
        <end position="388"/>
    </location>
</feature>
<feature type="domain" description="ATP-grasp" evidence="1">
    <location>
        <begin position="9"/>
        <end position="244"/>
    </location>
</feature>
<feature type="binding site" evidence="1">
    <location>
        <position position="46"/>
    </location>
    <ligand>
        <name>ATP</name>
        <dbReference type="ChEBI" id="CHEBI:30616"/>
    </ligand>
</feature>
<feature type="binding site" evidence="1">
    <location>
        <begin position="53"/>
        <end position="55"/>
    </location>
    <ligand>
        <name>ATP</name>
        <dbReference type="ChEBI" id="CHEBI:30616"/>
    </ligand>
</feature>
<feature type="binding site" evidence="1">
    <location>
        <position position="99"/>
    </location>
    <ligand>
        <name>ATP</name>
        <dbReference type="ChEBI" id="CHEBI:30616"/>
    </ligand>
</feature>
<feature type="binding site" evidence="1">
    <location>
        <position position="102"/>
    </location>
    <ligand>
        <name>ATP</name>
        <dbReference type="ChEBI" id="CHEBI:30616"/>
    </ligand>
</feature>
<feature type="binding site" evidence="1">
    <location>
        <position position="107"/>
    </location>
    <ligand>
        <name>ATP</name>
        <dbReference type="ChEBI" id="CHEBI:30616"/>
    </ligand>
</feature>
<feature type="binding site" evidence="1">
    <location>
        <position position="199"/>
    </location>
    <ligand>
        <name>Mg(2+)</name>
        <dbReference type="ChEBI" id="CHEBI:18420"/>
    </ligand>
</feature>
<feature type="binding site" evidence="1">
    <location>
        <position position="213"/>
    </location>
    <ligand>
        <name>Mg(2+)</name>
        <dbReference type="ChEBI" id="CHEBI:18420"/>
    </ligand>
</feature>
<feature type="binding site" evidence="1">
    <location>
        <position position="264"/>
    </location>
    <ligand>
        <name>substrate</name>
        <note>ligand shared with subunit alpha</note>
    </ligand>
</feature>
<feature type="binding site" evidence="1">
    <location>
        <begin position="321"/>
        <end position="323"/>
    </location>
    <ligand>
        <name>substrate</name>
        <note>ligand shared with subunit alpha</note>
    </ligand>
</feature>
<feature type="sequence conflict" description="In Ref. 3." evidence="3" ref="3">
    <original>DA</original>
    <variation>LP</variation>
    <location>
        <begin position="239"/>
        <end position="240"/>
    </location>
</feature>
<feature type="sequence conflict" description="In Ref. 1; AAD21622." evidence="3" ref="1">
    <original>SGLNIIAATSLTDAAQQVV</original>
    <variation>KRPEHHRGNQPDRRCPASL</variation>
    <location>
        <begin position="364"/>
        <end position="382"/>
    </location>
</feature>
<sequence>MNLHEYQGKQLFAEYGLPVSKGFAVDTPEEAAEACDKIGGSEWVVKAQVHAGGRGKAGGVKLVKSKEDAKAFAQQWLGKNLVTYQTDANGQPVSKILVESCTDIDKELYLGAVVDRSSRRIVFMASTEGGVDIEKVAHDTPEKILKATIDPLVGAQPYQGRELAFQLGLKGDQIKQFTHIFVGLAKLFQDYDLALLEVNPLVIKKDGNLHCLDAKINIDSNALYRQPKLRAMHDPSQDDAREAHAQKWELNYVALEGNIGCMVNGAGLAMGTMDIVNLHGGKPANFLDVGGGATKERVTEAFKIILSDSNVKAVLVNIFGGIVRCDMIAEGIIGAVKEVGVKVPVVVRLEGNNAELGAKVLAESGLNIIAATSLTDAAQQVVKAAEGK</sequence>
<accession>P53593</accession>
<accession>Q9X5W1</accession>
<name>SUCC_PSEAE</name>
<comment type="function">
    <text evidence="1 2">Succinyl-CoA synthetase functions in the citric acid cycle (TCA), coupling the hydrolysis of succinyl-CoA to the synthesis of either ATP or GTP and thus represents the only step of substrate-level phosphorylation in the TCA. The beta subunit provides nucleotide specificity of the enzyme and binds the substrate succinate, while the binding sites for coenzyme A and phosphate are found in the alpha subunit. Can also generate UTP or CTP, although it preferentially synthesizes ATP and/or GTP.</text>
</comment>
<comment type="catalytic activity">
    <reaction evidence="1 2">
        <text>succinate + ATP + CoA = succinyl-CoA + ADP + phosphate</text>
        <dbReference type="Rhea" id="RHEA:17661"/>
        <dbReference type="ChEBI" id="CHEBI:30031"/>
        <dbReference type="ChEBI" id="CHEBI:30616"/>
        <dbReference type="ChEBI" id="CHEBI:43474"/>
        <dbReference type="ChEBI" id="CHEBI:57287"/>
        <dbReference type="ChEBI" id="CHEBI:57292"/>
        <dbReference type="ChEBI" id="CHEBI:456216"/>
        <dbReference type="EC" id="6.2.1.5"/>
    </reaction>
    <physiologicalReaction direction="right-to-left" evidence="1 2">
        <dbReference type="Rhea" id="RHEA:17663"/>
    </physiologicalReaction>
</comment>
<comment type="catalytic activity">
    <reaction evidence="1 2">
        <text>GTP + succinate + CoA = succinyl-CoA + GDP + phosphate</text>
        <dbReference type="Rhea" id="RHEA:22120"/>
        <dbReference type="ChEBI" id="CHEBI:30031"/>
        <dbReference type="ChEBI" id="CHEBI:37565"/>
        <dbReference type="ChEBI" id="CHEBI:43474"/>
        <dbReference type="ChEBI" id="CHEBI:57287"/>
        <dbReference type="ChEBI" id="CHEBI:57292"/>
        <dbReference type="ChEBI" id="CHEBI:58189"/>
    </reaction>
    <physiologicalReaction direction="right-to-left" evidence="1 2">
        <dbReference type="Rhea" id="RHEA:22122"/>
    </physiologicalReaction>
</comment>
<comment type="cofactor">
    <cofactor evidence="1">
        <name>Mg(2+)</name>
        <dbReference type="ChEBI" id="CHEBI:18420"/>
    </cofactor>
    <text evidence="1">Binds 1 Mg(2+) ion per subunit.</text>
</comment>
<comment type="pathway">
    <text evidence="1">Carbohydrate metabolism; tricarboxylic acid cycle; succinate from succinyl-CoA (ligase route): step 1/1.</text>
</comment>
<comment type="subunit">
    <text evidence="1">Heterotetramer of two alpha and two beta subunits.</text>
</comment>
<comment type="similarity">
    <text evidence="1">Belongs to the succinate/malate CoA ligase beta subunit family.</text>
</comment>
<protein>
    <recommendedName>
        <fullName evidence="1">Succinate--CoA ligase [ADP-forming] subunit beta</fullName>
        <ecNumber evidence="1 2">6.2.1.5</ecNumber>
    </recommendedName>
    <alternativeName>
        <fullName evidence="1">Succinyl-CoA synthetase subunit beta</fullName>
        <shortName evidence="1">SCS-beta</shortName>
    </alternativeName>
</protein>
<gene>
    <name evidence="1" type="primary">sucC</name>
    <name type="ordered locus">PA1588</name>
</gene>
<reference key="1">
    <citation type="journal article" date="2000" name="J. Bacteriol.">
        <title>Succinyl coenzyme A synthetase of Pseudomonas aeruginosa with a broad specificity for nucleoside triphosphate (NTP) synthesis modulates specificity for NTP synthesis by the 12-kilodalton form of nucleoside diphosphate kinase.</title>
        <authorList>
            <person name="Kapatral V."/>
            <person name="Bina X."/>
            <person name="Chakrabarty A.M."/>
        </authorList>
    </citation>
    <scope>NUCLEOTIDE SEQUENCE [GENOMIC DNA]</scope>
    <scope>FUNCTION</scope>
    <scope>CATALYTIC ACTIVITY</scope>
    <source>
        <strain>ATCC 15692 / DSM 22644 / CIP 104116 / JCM 14847 / LMG 12228 / 1C / PRS 101 / PAO1</strain>
    </source>
</reference>
<reference key="2">
    <citation type="journal article" date="2000" name="Nature">
        <title>Complete genome sequence of Pseudomonas aeruginosa PAO1, an opportunistic pathogen.</title>
        <authorList>
            <person name="Stover C.K."/>
            <person name="Pham X.-Q.T."/>
            <person name="Erwin A.L."/>
            <person name="Mizoguchi S.D."/>
            <person name="Warrener P."/>
            <person name="Hickey M.J."/>
            <person name="Brinkman F.S.L."/>
            <person name="Hufnagle W.O."/>
            <person name="Kowalik D.J."/>
            <person name="Lagrou M."/>
            <person name="Garber R.L."/>
            <person name="Goltry L."/>
            <person name="Tolentino E."/>
            <person name="Westbrock-Wadman S."/>
            <person name="Yuan Y."/>
            <person name="Brody L.L."/>
            <person name="Coulter S.N."/>
            <person name="Folger K.R."/>
            <person name="Kas A."/>
            <person name="Larbig K."/>
            <person name="Lim R.M."/>
            <person name="Smith K.A."/>
            <person name="Spencer D.H."/>
            <person name="Wong G.K.-S."/>
            <person name="Wu Z."/>
            <person name="Paulsen I.T."/>
            <person name="Reizer J."/>
            <person name="Saier M.H. Jr."/>
            <person name="Hancock R.E.W."/>
            <person name="Lory S."/>
            <person name="Olson M.V."/>
        </authorList>
    </citation>
    <scope>NUCLEOTIDE SEQUENCE [LARGE SCALE GENOMIC DNA]</scope>
    <source>
        <strain>ATCC 15692 / DSM 22644 / CIP 104116 / JCM 14847 / LMG 12228 / 1C / PRS 101 / PAO1</strain>
    </source>
</reference>
<reference key="3">
    <citation type="journal article" date="1996" name="Microbiology">
        <title>Physical mapping of 32 genetic markers on the Pseudomonas aeruginosa PAO1 chromosome.</title>
        <authorList>
            <person name="Liao X."/>
            <person name="Charlebois I."/>
            <person name="Ouellet C."/>
            <person name="Morency M.J."/>
            <person name="Dewar K."/>
            <person name="Lightfoot J."/>
            <person name="Foster J."/>
            <person name="Siehnel R."/>
            <person name="Schweizer H."/>
            <person name="Lam J.S."/>
            <person name="Hancock R.E."/>
            <person name="Levesque R.C."/>
        </authorList>
    </citation>
    <scope>NUCLEOTIDE SEQUENCE [GENOMIC DNA] OF 239-388</scope>
    <source>
        <strain>ATCC 15692 / DSM 22644 / CIP 104116 / JCM 14847 / LMG 12228 / 1C / PRS 101 / PAO1</strain>
    </source>
</reference>